<comment type="function">
    <text evidence="1">Succinyl-CoA synthetase functions in the citric acid cycle (TCA), coupling the hydrolysis of succinyl-CoA to the synthesis of either ATP or GTP and thus represents the only step of substrate-level phosphorylation in the TCA. The beta subunit provides nucleotide specificity of the enzyme and binds the substrate succinate, while the binding sites for coenzyme A and phosphate are found in the alpha subunit.</text>
</comment>
<comment type="catalytic activity">
    <reaction evidence="1">
        <text>succinate + ATP + CoA = succinyl-CoA + ADP + phosphate</text>
        <dbReference type="Rhea" id="RHEA:17661"/>
        <dbReference type="ChEBI" id="CHEBI:30031"/>
        <dbReference type="ChEBI" id="CHEBI:30616"/>
        <dbReference type="ChEBI" id="CHEBI:43474"/>
        <dbReference type="ChEBI" id="CHEBI:57287"/>
        <dbReference type="ChEBI" id="CHEBI:57292"/>
        <dbReference type="ChEBI" id="CHEBI:456216"/>
        <dbReference type="EC" id="6.2.1.5"/>
    </reaction>
    <physiologicalReaction direction="right-to-left" evidence="1">
        <dbReference type="Rhea" id="RHEA:17663"/>
    </physiologicalReaction>
</comment>
<comment type="catalytic activity">
    <reaction evidence="1">
        <text>GTP + succinate + CoA = succinyl-CoA + GDP + phosphate</text>
        <dbReference type="Rhea" id="RHEA:22120"/>
        <dbReference type="ChEBI" id="CHEBI:30031"/>
        <dbReference type="ChEBI" id="CHEBI:37565"/>
        <dbReference type="ChEBI" id="CHEBI:43474"/>
        <dbReference type="ChEBI" id="CHEBI:57287"/>
        <dbReference type="ChEBI" id="CHEBI:57292"/>
        <dbReference type="ChEBI" id="CHEBI:58189"/>
    </reaction>
    <physiologicalReaction direction="right-to-left" evidence="1">
        <dbReference type="Rhea" id="RHEA:22122"/>
    </physiologicalReaction>
</comment>
<comment type="cofactor">
    <cofactor evidence="1">
        <name>Mg(2+)</name>
        <dbReference type="ChEBI" id="CHEBI:18420"/>
    </cofactor>
    <text evidence="1">Binds 1 Mg(2+) ion per subunit.</text>
</comment>
<comment type="pathway">
    <text evidence="1">Carbohydrate metabolism; tricarboxylic acid cycle; succinate from succinyl-CoA (ligase route): step 1/1.</text>
</comment>
<comment type="subunit">
    <text evidence="1">Heterotetramer of two alpha and two beta subunits.</text>
</comment>
<comment type="similarity">
    <text evidence="1">Belongs to the succinate/malate CoA ligase beta subunit family.</text>
</comment>
<keyword id="KW-0067">ATP-binding</keyword>
<keyword id="KW-0436">Ligase</keyword>
<keyword id="KW-0460">Magnesium</keyword>
<keyword id="KW-0479">Metal-binding</keyword>
<keyword id="KW-0547">Nucleotide-binding</keyword>
<keyword id="KW-0816">Tricarboxylic acid cycle</keyword>
<reference key="1">
    <citation type="journal article" date="2004" name="Nat. Biotechnol.">
        <title>The genome sequence of the capnophilic rumen bacterium Mannheimia succiniciproducens.</title>
        <authorList>
            <person name="Hong S.H."/>
            <person name="Kim J.S."/>
            <person name="Lee S.Y."/>
            <person name="In Y.H."/>
            <person name="Choi S.S."/>
            <person name="Rih J.-K."/>
            <person name="Kim C.H."/>
            <person name="Jeong H."/>
            <person name="Hur C.G."/>
            <person name="Kim J.J."/>
        </authorList>
    </citation>
    <scope>NUCLEOTIDE SEQUENCE [LARGE SCALE GENOMIC DNA]</scope>
    <source>
        <strain>KCTC 0769BP / MBEL55E</strain>
    </source>
</reference>
<feature type="chain" id="PRO_1000082119" description="Succinate--CoA ligase [ADP-forming] subunit beta">
    <location>
        <begin position="1"/>
        <end position="388"/>
    </location>
</feature>
<feature type="domain" description="ATP-grasp" evidence="1">
    <location>
        <begin position="9"/>
        <end position="244"/>
    </location>
</feature>
<feature type="binding site" evidence="1">
    <location>
        <position position="46"/>
    </location>
    <ligand>
        <name>ATP</name>
        <dbReference type="ChEBI" id="CHEBI:30616"/>
    </ligand>
</feature>
<feature type="binding site" evidence="1">
    <location>
        <begin position="53"/>
        <end position="55"/>
    </location>
    <ligand>
        <name>ATP</name>
        <dbReference type="ChEBI" id="CHEBI:30616"/>
    </ligand>
</feature>
<feature type="binding site" evidence="1">
    <location>
        <position position="99"/>
    </location>
    <ligand>
        <name>ATP</name>
        <dbReference type="ChEBI" id="CHEBI:30616"/>
    </ligand>
</feature>
<feature type="binding site" evidence="1">
    <location>
        <position position="102"/>
    </location>
    <ligand>
        <name>ATP</name>
        <dbReference type="ChEBI" id="CHEBI:30616"/>
    </ligand>
</feature>
<feature type="binding site" evidence="1">
    <location>
        <position position="107"/>
    </location>
    <ligand>
        <name>ATP</name>
        <dbReference type="ChEBI" id="CHEBI:30616"/>
    </ligand>
</feature>
<feature type="binding site" evidence="1">
    <location>
        <position position="199"/>
    </location>
    <ligand>
        <name>Mg(2+)</name>
        <dbReference type="ChEBI" id="CHEBI:18420"/>
    </ligand>
</feature>
<feature type="binding site" evidence="1">
    <location>
        <position position="213"/>
    </location>
    <ligand>
        <name>Mg(2+)</name>
        <dbReference type="ChEBI" id="CHEBI:18420"/>
    </ligand>
</feature>
<feature type="binding site" evidence="1">
    <location>
        <position position="264"/>
    </location>
    <ligand>
        <name>substrate</name>
        <note>ligand shared with subunit alpha</note>
    </ligand>
</feature>
<feature type="binding site" evidence="1">
    <location>
        <begin position="321"/>
        <end position="323"/>
    </location>
    <ligand>
        <name>substrate</name>
        <note>ligand shared with subunit alpha</note>
    </ligand>
</feature>
<name>SUCC_MANSM</name>
<organism>
    <name type="scientific">Mannheimia succiniciproducens (strain KCTC 0769BP / MBEL55E)</name>
    <dbReference type="NCBI Taxonomy" id="221988"/>
    <lineage>
        <taxon>Bacteria</taxon>
        <taxon>Pseudomonadati</taxon>
        <taxon>Pseudomonadota</taxon>
        <taxon>Gammaproteobacteria</taxon>
        <taxon>Pasteurellales</taxon>
        <taxon>Pasteurellaceae</taxon>
        <taxon>Basfia</taxon>
    </lineage>
</organism>
<evidence type="ECO:0000255" key="1">
    <source>
        <dbReference type="HAMAP-Rule" id="MF_00558"/>
    </source>
</evidence>
<dbReference type="EC" id="6.2.1.5" evidence="1"/>
<dbReference type="EMBL" id="AE016827">
    <property type="protein sequence ID" value="AAU37959.1"/>
    <property type="molecule type" value="Genomic_DNA"/>
</dbReference>
<dbReference type="RefSeq" id="WP_011200526.1">
    <property type="nucleotide sequence ID" value="NC_006300.1"/>
</dbReference>
<dbReference type="SMR" id="Q65SV1"/>
<dbReference type="STRING" id="221988.MS1352"/>
<dbReference type="KEGG" id="msu:MS1352"/>
<dbReference type="eggNOG" id="COG0045">
    <property type="taxonomic scope" value="Bacteria"/>
</dbReference>
<dbReference type="HOGENOM" id="CLU_037430_0_2_6"/>
<dbReference type="OrthoDB" id="9802602at2"/>
<dbReference type="UniPathway" id="UPA00223">
    <property type="reaction ID" value="UER00999"/>
</dbReference>
<dbReference type="Proteomes" id="UP000000607">
    <property type="component" value="Chromosome"/>
</dbReference>
<dbReference type="GO" id="GO:0005829">
    <property type="term" value="C:cytosol"/>
    <property type="evidence" value="ECO:0007669"/>
    <property type="project" value="TreeGrafter"/>
</dbReference>
<dbReference type="GO" id="GO:0042709">
    <property type="term" value="C:succinate-CoA ligase complex"/>
    <property type="evidence" value="ECO:0007669"/>
    <property type="project" value="TreeGrafter"/>
</dbReference>
<dbReference type="GO" id="GO:0005524">
    <property type="term" value="F:ATP binding"/>
    <property type="evidence" value="ECO:0007669"/>
    <property type="project" value="UniProtKB-UniRule"/>
</dbReference>
<dbReference type="GO" id="GO:0000287">
    <property type="term" value="F:magnesium ion binding"/>
    <property type="evidence" value="ECO:0007669"/>
    <property type="project" value="UniProtKB-UniRule"/>
</dbReference>
<dbReference type="GO" id="GO:0004775">
    <property type="term" value="F:succinate-CoA ligase (ADP-forming) activity"/>
    <property type="evidence" value="ECO:0007669"/>
    <property type="project" value="UniProtKB-UniRule"/>
</dbReference>
<dbReference type="GO" id="GO:0004776">
    <property type="term" value="F:succinate-CoA ligase (GDP-forming) activity"/>
    <property type="evidence" value="ECO:0007669"/>
    <property type="project" value="RHEA"/>
</dbReference>
<dbReference type="GO" id="GO:0006104">
    <property type="term" value="P:succinyl-CoA metabolic process"/>
    <property type="evidence" value="ECO:0007669"/>
    <property type="project" value="TreeGrafter"/>
</dbReference>
<dbReference type="GO" id="GO:0006099">
    <property type="term" value="P:tricarboxylic acid cycle"/>
    <property type="evidence" value="ECO:0007669"/>
    <property type="project" value="UniProtKB-UniRule"/>
</dbReference>
<dbReference type="FunFam" id="3.30.1490.20:FF:000002">
    <property type="entry name" value="Succinate--CoA ligase [ADP-forming] subunit beta"/>
    <property type="match status" value="1"/>
</dbReference>
<dbReference type="FunFam" id="3.30.470.20:FF:000002">
    <property type="entry name" value="Succinate--CoA ligase [ADP-forming] subunit beta"/>
    <property type="match status" value="1"/>
</dbReference>
<dbReference type="FunFam" id="3.40.50.261:FF:000001">
    <property type="entry name" value="Succinate--CoA ligase [ADP-forming] subunit beta"/>
    <property type="match status" value="1"/>
</dbReference>
<dbReference type="Gene3D" id="3.30.1490.20">
    <property type="entry name" value="ATP-grasp fold, A domain"/>
    <property type="match status" value="1"/>
</dbReference>
<dbReference type="Gene3D" id="3.30.470.20">
    <property type="entry name" value="ATP-grasp fold, B domain"/>
    <property type="match status" value="1"/>
</dbReference>
<dbReference type="Gene3D" id="3.40.50.261">
    <property type="entry name" value="Succinyl-CoA synthetase domains"/>
    <property type="match status" value="1"/>
</dbReference>
<dbReference type="HAMAP" id="MF_00558">
    <property type="entry name" value="Succ_CoA_beta"/>
    <property type="match status" value="1"/>
</dbReference>
<dbReference type="InterPro" id="IPR013650">
    <property type="entry name" value="ATP-grasp_succ-CoA_synth-type"/>
</dbReference>
<dbReference type="InterPro" id="IPR013815">
    <property type="entry name" value="ATP_grasp_subdomain_1"/>
</dbReference>
<dbReference type="InterPro" id="IPR017866">
    <property type="entry name" value="Succ-CoA_synthase_bsu_CS"/>
</dbReference>
<dbReference type="InterPro" id="IPR005811">
    <property type="entry name" value="SUCC_ACL_C"/>
</dbReference>
<dbReference type="InterPro" id="IPR005809">
    <property type="entry name" value="Succ_CoA_ligase-like_bsu"/>
</dbReference>
<dbReference type="InterPro" id="IPR016102">
    <property type="entry name" value="Succinyl-CoA_synth-like"/>
</dbReference>
<dbReference type="NCBIfam" id="NF001913">
    <property type="entry name" value="PRK00696.1"/>
    <property type="match status" value="1"/>
</dbReference>
<dbReference type="NCBIfam" id="TIGR01016">
    <property type="entry name" value="sucCoAbeta"/>
    <property type="match status" value="1"/>
</dbReference>
<dbReference type="PANTHER" id="PTHR11815:SF10">
    <property type="entry name" value="SUCCINATE--COA LIGASE [GDP-FORMING] SUBUNIT BETA, MITOCHONDRIAL"/>
    <property type="match status" value="1"/>
</dbReference>
<dbReference type="PANTHER" id="PTHR11815">
    <property type="entry name" value="SUCCINYL-COA SYNTHETASE BETA CHAIN"/>
    <property type="match status" value="1"/>
</dbReference>
<dbReference type="Pfam" id="PF08442">
    <property type="entry name" value="ATP-grasp_2"/>
    <property type="match status" value="1"/>
</dbReference>
<dbReference type="Pfam" id="PF00549">
    <property type="entry name" value="Ligase_CoA"/>
    <property type="match status" value="1"/>
</dbReference>
<dbReference type="PIRSF" id="PIRSF001554">
    <property type="entry name" value="SucCS_beta"/>
    <property type="match status" value="1"/>
</dbReference>
<dbReference type="SUPFAM" id="SSF56059">
    <property type="entry name" value="Glutathione synthetase ATP-binding domain-like"/>
    <property type="match status" value="1"/>
</dbReference>
<dbReference type="SUPFAM" id="SSF52210">
    <property type="entry name" value="Succinyl-CoA synthetase domains"/>
    <property type="match status" value="1"/>
</dbReference>
<dbReference type="PROSITE" id="PS01217">
    <property type="entry name" value="SUCCINYL_COA_LIG_3"/>
    <property type="match status" value="1"/>
</dbReference>
<gene>
    <name evidence="1" type="primary">sucC</name>
    <name type="ordered locus">MS1352</name>
</gene>
<proteinExistence type="inferred from homology"/>
<accession>Q65SV1</accession>
<protein>
    <recommendedName>
        <fullName evidence="1">Succinate--CoA ligase [ADP-forming] subunit beta</fullName>
        <ecNumber evidence="1">6.2.1.5</ecNumber>
    </recommendedName>
    <alternativeName>
        <fullName evidence="1">Succinyl-CoA synthetase subunit beta</fullName>
        <shortName evidence="1">SCS-beta</shortName>
    </alternativeName>
</protein>
<sequence length="388" mass="41764">MNLHEYQAKQIFAQYGLPVSEGCACQSLEEAIQAVKKLGGGQWVAKCQVHAGGRGKAGGVKLVKSEEEVRSFFEKFLGQRLVTFQTDAKGQPVNAIYMEACANVKKELYLGAVLDRSSQRIVFMVSTEGGVNIEEVAEKTPHLLHKMPIDPLVGAMPYQGRELAFKLGLQGKQIQQFAQIFCQLGKMFVEKDLSLLEINPLVILDNDQLHCLDAKIVVDGNALYRQPELNAMRDPSQEDAREAAAEQWHLNYVALEGNIGCMVNGAGLAMGTMDIVKLHGGQPANFLDVGGGTTKERVAEAFKIILSDQSVKAILVNIFGGIVRCDLIAEGIVAAVNEVGVSVPVVVRLEGNNAPLGREILAQSGLNIIAATSLTDAAVQVVNAAEGK</sequence>